<dbReference type="EC" id="3.1.21.10" evidence="1"/>
<dbReference type="EMBL" id="CP000489">
    <property type="protein sequence ID" value="ABL68808.1"/>
    <property type="molecule type" value="Genomic_DNA"/>
</dbReference>
<dbReference type="RefSeq" id="WP_011747041.1">
    <property type="nucleotide sequence ID" value="NC_008686.1"/>
</dbReference>
<dbReference type="SMR" id="A1AZW4"/>
<dbReference type="STRING" id="318586.Pden_0696"/>
<dbReference type="EnsemblBacteria" id="ABL68808">
    <property type="protein sequence ID" value="ABL68808"/>
    <property type="gene ID" value="Pden_0696"/>
</dbReference>
<dbReference type="GeneID" id="93451920"/>
<dbReference type="KEGG" id="pde:Pden_0696"/>
<dbReference type="eggNOG" id="COG0817">
    <property type="taxonomic scope" value="Bacteria"/>
</dbReference>
<dbReference type="HOGENOM" id="CLU_091257_3_1_5"/>
<dbReference type="OrthoDB" id="9805499at2"/>
<dbReference type="Proteomes" id="UP000000361">
    <property type="component" value="Chromosome 1"/>
</dbReference>
<dbReference type="GO" id="GO:0005737">
    <property type="term" value="C:cytoplasm"/>
    <property type="evidence" value="ECO:0007669"/>
    <property type="project" value="UniProtKB-SubCell"/>
</dbReference>
<dbReference type="GO" id="GO:0048476">
    <property type="term" value="C:Holliday junction resolvase complex"/>
    <property type="evidence" value="ECO:0007669"/>
    <property type="project" value="UniProtKB-UniRule"/>
</dbReference>
<dbReference type="GO" id="GO:0008821">
    <property type="term" value="F:crossover junction DNA endonuclease activity"/>
    <property type="evidence" value="ECO:0007669"/>
    <property type="project" value="UniProtKB-UniRule"/>
</dbReference>
<dbReference type="GO" id="GO:0003677">
    <property type="term" value="F:DNA binding"/>
    <property type="evidence" value="ECO:0007669"/>
    <property type="project" value="UniProtKB-KW"/>
</dbReference>
<dbReference type="GO" id="GO:0000287">
    <property type="term" value="F:magnesium ion binding"/>
    <property type="evidence" value="ECO:0007669"/>
    <property type="project" value="UniProtKB-UniRule"/>
</dbReference>
<dbReference type="GO" id="GO:0006310">
    <property type="term" value="P:DNA recombination"/>
    <property type="evidence" value="ECO:0007669"/>
    <property type="project" value="UniProtKB-UniRule"/>
</dbReference>
<dbReference type="GO" id="GO:0006281">
    <property type="term" value="P:DNA repair"/>
    <property type="evidence" value="ECO:0007669"/>
    <property type="project" value="UniProtKB-UniRule"/>
</dbReference>
<dbReference type="CDD" id="cd16962">
    <property type="entry name" value="RuvC"/>
    <property type="match status" value="1"/>
</dbReference>
<dbReference type="FunFam" id="3.30.420.10:FF:000002">
    <property type="entry name" value="Crossover junction endodeoxyribonuclease RuvC"/>
    <property type="match status" value="1"/>
</dbReference>
<dbReference type="Gene3D" id="3.30.420.10">
    <property type="entry name" value="Ribonuclease H-like superfamily/Ribonuclease H"/>
    <property type="match status" value="1"/>
</dbReference>
<dbReference type="HAMAP" id="MF_00034">
    <property type="entry name" value="RuvC"/>
    <property type="match status" value="1"/>
</dbReference>
<dbReference type="InterPro" id="IPR012337">
    <property type="entry name" value="RNaseH-like_sf"/>
</dbReference>
<dbReference type="InterPro" id="IPR036397">
    <property type="entry name" value="RNaseH_sf"/>
</dbReference>
<dbReference type="InterPro" id="IPR020563">
    <property type="entry name" value="X-over_junc_endoDNase_Mg_BS"/>
</dbReference>
<dbReference type="InterPro" id="IPR002176">
    <property type="entry name" value="X-over_junc_endoDNase_RuvC"/>
</dbReference>
<dbReference type="NCBIfam" id="TIGR00228">
    <property type="entry name" value="ruvC"/>
    <property type="match status" value="1"/>
</dbReference>
<dbReference type="PANTHER" id="PTHR30194">
    <property type="entry name" value="CROSSOVER JUNCTION ENDODEOXYRIBONUCLEASE RUVC"/>
    <property type="match status" value="1"/>
</dbReference>
<dbReference type="PANTHER" id="PTHR30194:SF3">
    <property type="entry name" value="CROSSOVER JUNCTION ENDODEOXYRIBONUCLEASE RUVC"/>
    <property type="match status" value="1"/>
</dbReference>
<dbReference type="Pfam" id="PF02075">
    <property type="entry name" value="RuvC"/>
    <property type="match status" value="1"/>
</dbReference>
<dbReference type="PRINTS" id="PR00696">
    <property type="entry name" value="RSOLVASERUVC"/>
</dbReference>
<dbReference type="SUPFAM" id="SSF53098">
    <property type="entry name" value="Ribonuclease H-like"/>
    <property type="match status" value="1"/>
</dbReference>
<dbReference type="PROSITE" id="PS01321">
    <property type="entry name" value="RUVC"/>
    <property type="match status" value="1"/>
</dbReference>
<accession>A1AZW4</accession>
<comment type="function">
    <text evidence="1">The RuvA-RuvB-RuvC complex processes Holliday junction (HJ) DNA during genetic recombination and DNA repair. Endonuclease that resolves HJ intermediates. Cleaves cruciform DNA by making single-stranded nicks across the HJ at symmetrical positions within the homologous arms, yielding a 5'-phosphate and a 3'-hydroxyl group; requires a central core of homology in the junction. The consensus cleavage sequence is 5'-(A/T)TT(C/G)-3'. Cleavage occurs on the 3'-side of the TT dinucleotide at the point of strand exchange. HJ branch migration catalyzed by RuvA-RuvB allows RuvC to scan DNA until it finds its consensus sequence, where it cleaves and resolves the cruciform DNA.</text>
</comment>
<comment type="catalytic activity">
    <reaction evidence="1">
        <text>Endonucleolytic cleavage at a junction such as a reciprocal single-stranded crossover between two homologous DNA duplexes (Holliday junction).</text>
        <dbReference type="EC" id="3.1.21.10"/>
    </reaction>
</comment>
<comment type="cofactor">
    <cofactor evidence="1">
        <name>Mg(2+)</name>
        <dbReference type="ChEBI" id="CHEBI:18420"/>
    </cofactor>
    <text evidence="1">Binds 2 Mg(2+) ion per subunit.</text>
</comment>
<comment type="subunit">
    <text evidence="1">Homodimer which binds Holliday junction (HJ) DNA. The HJ becomes 2-fold symmetrical on binding to RuvC with unstacked arms; it has a different conformation from HJ DNA in complex with RuvA. In the full resolvosome a probable DNA-RuvA(4)-RuvB(12)-RuvC(2) complex forms which resolves the HJ.</text>
</comment>
<comment type="subcellular location">
    <subcellularLocation>
        <location evidence="1">Cytoplasm</location>
    </subcellularLocation>
</comment>
<comment type="similarity">
    <text evidence="1">Belongs to the RuvC family.</text>
</comment>
<evidence type="ECO:0000255" key="1">
    <source>
        <dbReference type="HAMAP-Rule" id="MF_00034"/>
    </source>
</evidence>
<name>RUVC_PARDP</name>
<keyword id="KW-0963">Cytoplasm</keyword>
<keyword id="KW-0227">DNA damage</keyword>
<keyword id="KW-0233">DNA recombination</keyword>
<keyword id="KW-0234">DNA repair</keyword>
<keyword id="KW-0238">DNA-binding</keyword>
<keyword id="KW-0255">Endonuclease</keyword>
<keyword id="KW-0378">Hydrolase</keyword>
<keyword id="KW-0460">Magnesium</keyword>
<keyword id="KW-0479">Metal-binding</keyword>
<keyword id="KW-0540">Nuclease</keyword>
<keyword id="KW-1185">Reference proteome</keyword>
<gene>
    <name evidence="1" type="primary">ruvC</name>
    <name type="ordered locus">Pden_0696</name>
</gene>
<feature type="chain" id="PRO_1000002787" description="Crossover junction endodeoxyribonuclease RuvC">
    <location>
        <begin position="1"/>
        <end position="164"/>
    </location>
</feature>
<feature type="active site" evidence="1">
    <location>
        <position position="7"/>
    </location>
</feature>
<feature type="active site" evidence="1">
    <location>
        <position position="66"/>
    </location>
</feature>
<feature type="active site" evidence="1">
    <location>
        <position position="138"/>
    </location>
</feature>
<feature type="binding site" evidence="1">
    <location>
        <position position="7"/>
    </location>
    <ligand>
        <name>Mg(2+)</name>
        <dbReference type="ChEBI" id="CHEBI:18420"/>
        <label>1</label>
    </ligand>
</feature>
<feature type="binding site" evidence="1">
    <location>
        <position position="66"/>
    </location>
    <ligand>
        <name>Mg(2+)</name>
        <dbReference type="ChEBI" id="CHEBI:18420"/>
        <label>2</label>
    </ligand>
</feature>
<feature type="binding site" evidence="1">
    <location>
        <position position="138"/>
    </location>
    <ligand>
        <name>Mg(2+)</name>
        <dbReference type="ChEBI" id="CHEBI:18420"/>
        <label>1</label>
    </ligand>
</feature>
<reference key="1">
    <citation type="submission" date="2006-12" db="EMBL/GenBank/DDBJ databases">
        <title>Complete sequence of chromosome 1 of Paracoccus denitrificans PD1222.</title>
        <authorList>
            <person name="Copeland A."/>
            <person name="Lucas S."/>
            <person name="Lapidus A."/>
            <person name="Barry K."/>
            <person name="Detter J.C."/>
            <person name="Glavina del Rio T."/>
            <person name="Hammon N."/>
            <person name="Israni S."/>
            <person name="Dalin E."/>
            <person name="Tice H."/>
            <person name="Pitluck S."/>
            <person name="Munk A.C."/>
            <person name="Brettin T."/>
            <person name="Bruce D."/>
            <person name="Han C."/>
            <person name="Tapia R."/>
            <person name="Gilna P."/>
            <person name="Schmutz J."/>
            <person name="Larimer F."/>
            <person name="Land M."/>
            <person name="Hauser L."/>
            <person name="Kyrpides N."/>
            <person name="Lykidis A."/>
            <person name="Spiro S."/>
            <person name="Richardson D.J."/>
            <person name="Moir J.W.B."/>
            <person name="Ferguson S.J."/>
            <person name="van Spanning R.J.M."/>
            <person name="Richardson P."/>
        </authorList>
    </citation>
    <scope>NUCLEOTIDE SEQUENCE [LARGE SCALE GENOMIC DNA]</scope>
    <source>
        <strain>Pd 1222</strain>
    </source>
</reference>
<protein>
    <recommendedName>
        <fullName evidence="1">Crossover junction endodeoxyribonuclease RuvC</fullName>
        <ecNumber evidence="1">3.1.21.10</ecNumber>
    </recommendedName>
    <alternativeName>
        <fullName evidence="1">Holliday junction nuclease RuvC</fullName>
    </alternativeName>
    <alternativeName>
        <fullName evidence="1">Holliday junction resolvase RuvC</fullName>
    </alternativeName>
</protein>
<organism>
    <name type="scientific">Paracoccus denitrificans (strain Pd 1222)</name>
    <dbReference type="NCBI Taxonomy" id="318586"/>
    <lineage>
        <taxon>Bacteria</taxon>
        <taxon>Pseudomonadati</taxon>
        <taxon>Pseudomonadota</taxon>
        <taxon>Alphaproteobacteria</taxon>
        <taxon>Rhodobacterales</taxon>
        <taxon>Paracoccaceae</taxon>
        <taxon>Paracoccus</taxon>
    </lineage>
</organism>
<proteinExistence type="inferred from homology"/>
<sequence>MKIIGIDPGLRNMGWGVIAVEGPRLRHLDNGIVHSEAGDLGPRLAALYRGLCAVIVRHAPDAAAVEQTFVNKDALGTLKLGQARGIALLAPAEAGLEIGEYAPNAVKKAVVGVGHAAKEQIQHMVRFMLPGVEFAGPDAADALAVAICHAHHLQGRALRIKASA</sequence>